<keyword id="KW-0067">ATP-binding</keyword>
<keyword id="KW-0414">Isoprene biosynthesis</keyword>
<keyword id="KW-0418">Kinase</keyword>
<keyword id="KW-0547">Nucleotide-binding</keyword>
<keyword id="KW-1185">Reference proteome</keyword>
<keyword id="KW-0808">Transferase</keyword>
<sequence>MRTQWPSPAKLNLFLYITGQRADGYHTLQTLFQFLDYGDTISIELRDDGDIRLLTPVEGVEHEDNLIVRAARLLMKTAADSGRLSTGSGANISIDKRLPMGGGLGGGSSNAATVLVALNHLWQCGLSMDELAEMGLTLGADVPVFVRGHAAFAEGVGEILTPVDPPEKWYLVAHPGVSIPTPVIFKDPELPRNTPKRSIETLLKCEFSNDCEVIARKRFREVDAVLSWLLEYAPSRLTGTGACVFAEFDTESEARQVLEQAPEWLNGFVAKGVNLSPLHRAML</sequence>
<comment type="function">
    <text evidence="1">Catalyzes the phosphorylation of the position 2 hydroxy group of 4-diphosphocytidyl-2C-methyl-D-erythritol.</text>
</comment>
<comment type="catalytic activity">
    <reaction evidence="1">
        <text>4-CDP-2-C-methyl-D-erythritol + ATP = 4-CDP-2-C-methyl-D-erythritol 2-phosphate + ADP + H(+)</text>
        <dbReference type="Rhea" id="RHEA:18437"/>
        <dbReference type="ChEBI" id="CHEBI:15378"/>
        <dbReference type="ChEBI" id="CHEBI:30616"/>
        <dbReference type="ChEBI" id="CHEBI:57823"/>
        <dbReference type="ChEBI" id="CHEBI:57919"/>
        <dbReference type="ChEBI" id="CHEBI:456216"/>
        <dbReference type="EC" id="2.7.1.148"/>
    </reaction>
</comment>
<comment type="pathway">
    <text evidence="1">Isoprenoid biosynthesis; isopentenyl diphosphate biosynthesis via DXP pathway; isopentenyl diphosphate from 1-deoxy-D-xylulose 5-phosphate: step 3/6.</text>
</comment>
<comment type="subunit">
    <text evidence="1">Homodimer.</text>
</comment>
<comment type="similarity">
    <text evidence="1">Belongs to the GHMP kinase family. IspE subfamily.</text>
</comment>
<organism>
    <name type="scientific">Escherichia coli O45:K1 (strain S88 / ExPEC)</name>
    <dbReference type="NCBI Taxonomy" id="585035"/>
    <lineage>
        <taxon>Bacteria</taxon>
        <taxon>Pseudomonadati</taxon>
        <taxon>Pseudomonadota</taxon>
        <taxon>Gammaproteobacteria</taxon>
        <taxon>Enterobacterales</taxon>
        <taxon>Enterobacteriaceae</taxon>
        <taxon>Escherichia</taxon>
    </lineage>
</organism>
<proteinExistence type="inferred from homology"/>
<gene>
    <name evidence="1" type="primary">ispE</name>
    <name type="ordered locus">ECS88_1276</name>
</gene>
<name>ISPE_ECO45</name>
<feature type="chain" id="PRO_1000116926" description="4-diphosphocytidyl-2-C-methyl-D-erythritol kinase">
    <location>
        <begin position="1"/>
        <end position="283"/>
    </location>
</feature>
<feature type="active site" evidence="1">
    <location>
        <position position="10"/>
    </location>
</feature>
<feature type="active site" evidence="1">
    <location>
        <position position="141"/>
    </location>
</feature>
<feature type="binding site" evidence="1">
    <location>
        <begin position="99"/>
        <end position="109"/>
    </location>
    <ligand>
        <name>ATP</name>
        <dbReference type="ChEBI" id="CHEBI:30616"/>
    </ligand>
</feature>
<dbReference type="EC" id="2.7.1.148" evidence="1"/>
<dbReference type="EMBL" id="CU928161">
    <property type="protein sequence ID" value="CAR02602.1"/>
    <property type="molecule type" value="Genomic_DNA"/>
</dbReference>
<dbReference type="RefSeq" id="WP_001260346.1">
    <property type="nucleotide sequence ID" value="NC_011742.1"/>
</dbReference>
<dbReference type="SMR" id="B7MKB0"/>
<dbReference type="KEGG" id="ecz:ECS88_1276"/>
<dbReference type="HOGENOM" id="CLU_053057_3_0_6"/>
<dbReference type="UniPathway" id="UPA00056">
    <property type="reaction ID" value="UER00094"/>
</dbReference>
<dbReference type="Proteomes" id="UP000000747">
    <property type="component" value="Chromosome"/>
</dbReference>
<dbReference type="GO" id="GO:0050515">
    <property type="term" value="F:4-(cytidine 5'-diphospho)-2-C-methyl-D-erythritol kinase activity"/>
    <property type="evidence" value="ECO:0007669"/>
    <property type="project" value="UniProtKB-UniRule"/>
</dbReference>
<dbReference type="GO" id="GO:0005524">
    <property type="term" value="F:ATP binding"/>
    <property type="evidence" value="ECO:0007669"/>
    <property type="project" value="UniProtKB-UniRule"/>
</dbReference>
<dbReference type="GO" id="GO:0019288">
    <property type="term" value="P:isopentenyl diphosphate biosynthetic process, methylerythritol 4-phosphate pathway"/>
    <property type="evidence" value="ECO:0007669"/>
    <property type="project" value="UniProtKB-UniRule"/>
</dbReference>
<dbReference type="GO" id="GO:0016114">
    <property type="term" value="P:terpenoid biosynthetic process"/>
    <property type="evidence" value="ECO:0007669"/>
    <property type="project" value="InterPro"/>
</dbReference>
<dbReference type="FunFam" id="3.30.230.10:FF:000022">
    <property type="entry name" value="4-diphosphocytidyl-2-C-methyl-D-erythritol kinase"/>
    <property type="match status" value="1"/>
</dbReference>
<dbReference type="FunFam" id="3.30.70.890:FF:000004">
    <property type="entry name" value="4-diphosphocytidyl-2-C-methyl-D-erythritol kinase"/>
    <property type="match status" value="1"/>
</dbReference>
<dbReference type="Gene3D" id="3.30.230.10">
    <property type="match status" value="1"/>
</dbReference>
<dbReference type="Gene3D" id="3.30.70.890">
    <property type="entry name" value="GHMP kinase, C-terminal domain"/>
    <property type="match status" value="1"/>
</dbReference>
<dbReference type="HAMAP" id="MF_00061">
    <property type="entry name" value="IspE"/>
    <property type="match status" value="1"/>
</dbReference>
<dbReference type="InterPro" id="IPR013750">
    <property type="entry name" value="GHMP_kinase_C_dom"/>
</dbReference>
<dbReference type="InterPro" id="IPR036554">
    <property type="entry name" value="GHMP_kinase_C_sf"/>
</dbReference>
<dbReference type="InterPro" id="IPR006204">
    <property type="entry name" value="GHMP_kinase_N_dom"/>
</dbReference>
<dbReference type="InterPro" id="IPR004424">
    <property type="entry name" value="IspE"/>
</dbReference>
<dbReference type="InterPro" id="IPR020568">
    <property type="entry name" value="Ribosomal_Su5_D2-typ_SF"/>
</dbReference>
<dbReference type="InterPro" id="IPR014721">
    <property type="entry name" value="Ribsml_uS5_D2-typ_fold_subgr"/>
</dbReference>
<dbReference type="NCBIfam" id="TIGR00154">
    <property type="entry name" value="ispE"/>
    <property type="match status" value="1"/>
</dbReference>
<dbReference type="PANTHER" id="PTHR43527">
    <property type="entry name" value="4-DIPHOSPHOCYTIDYL-2-C-METHYL-D-ERYTHRITOL KINASE, CHLOROPLASTIC"/>
    <property type="match status" value="1"/>
</dbReference>
<dbReference type="PANTHER" id="PTHR43527:SF2">
    <property type="entry name" value="4-DIPHOSPHOCYTIDYL-2-C-METHYL-D-ERYTHRITOL KINASE, CHLOROPLASTIC"/>
    <property type="match status" value="1"/>
</dbReference>
<dbReference type="Pfam" id="PF08544">
    <property type="entry name" value="GHMP_kinases_C"/>
    <property type="match status" value="1"/>
</dbReference>
<dbReference type="Pfam" id="PF00288">
    <property type="entry name" value="GHMP_kinases_N"/>
    <property type="match status" value="1"/>
</dbReference>
<dbReference type="PIRSF" id="PIRSF010376">
    <property type="entry name" value="IspE"/>
    <property type="match status" value="1"/>
</dbReference>
<dbReference type="SUPFAM" id="SSF55060">
    <property type="entry name" value="GHMP Kinase, C-terminal domain"/>
    <property type="match status" value="1"/>
</dbReference>
<dbReference type="SUPFAM" id="SSF54211">
    <property type="entry name" value="Ribosomal protein S5 domain 2-like"/>
    <property type="match status" value="1"/>
</dbReference>
<evidence type="ECO:0000255" key="1">
    <source>
        <dbReference type="HAMAP-Rule" id="MF_00061"/>
    </source>
</evidence>
<reference key="1">
    <citation type="journal article" date="2009" name="PLoS Genet.">
        <title>Organised genome dynamics in the Escherichia coli species results in highly diverse adaptive paths.</title>
        <authorList>
            <person name="Touchon M."/>
            <person name="Hoede C."/>
            <person name="Tenaillon O."/>
            <person name="Barbe V."/>
            <person name="Baeriswyl S."/>
            <person name="Bidet P."/>
            <person name="Bingen E."/>
            <person name="Bonacorsi S."/>
            <person name="Bouchier C."/>
            <person name="Bouvet O."/>
            <person name="Calteau A."/>
            <person name="Chiapello H."/>
            <person name="Clermont O."/>
            <person name="Cruveiller S."/>
            <person name="Danchin A."/>
            <person name="Diard M."/>
            <person name="Dossat C."/>
            <person name="Karoui M.E."/>
            <person name="Frapy E."/>
            <person name="Garry L."/>
            <person name="Ghigo J.M."/>
            <person name="Gilles A.M."/>
            <person name="Johnson J."/>
            <person name="Le Bouguenec C."/>
            <person name="Lescat M."/>
            <person name="Mangenot S."/>
            <person name="Martinez-Jehanne V."/>
            <person name="Matic I."/>
            <person name="Nassif X."/>
            <person name="Oztas S."/>
            <person name="Petit M.A."/>
            <person name="Pichon C."/>
            <person name="Rouy Z."/>
            <person name="Ruf C.S."/>
            <person name="Schneider D."/>
            <person name="Tourret J."/>
            <person name="Vacherie B."/>
            <person name="Vallenet D."/>
            <person name="Medigue C."/>
            <person name="Rocha E.P.C."/>
            <person name="Denamur E."/>
        </authorList>
    </citation>
    <scope>NUCLEOTIDE SEQUENCE [LARGE SCALE GENOMIC DNA]</scope>
    <source>
        <strain>S88 / ExPEC</strain>
    </source>
</reference>
<protein>
    <recommendedName>
        <fullName evidence="1">4-diphosphocytidyl-2-C-methyl-D-erythritol kinase</fullName>
        <shortName evidence="1">CMK</shortName>
        <ecNumber evidence="1">2.7.1.148</ecNumber>
    </recommendedName>
    <alternativeName>
        <fullName evidence="1">4-(cytidine-5'-diphospho)-2-C-methyl-D-erythritol kinase</fullName>
    </alternativeName>
</protein>
<accession>B7MKB0</accession>